<proteinExistence type="inferred from homology"/>
<sequence>MEELKALILSIQFMTGIPIPINIDVKEDKIYKIASYFPVVGLLIGGILYIAYLLLKDLFSREIVMTFLVAFSYILTRGMHIDGLADTFDGLFSNKDREKIIEIMKDSRLGTNGVLALVFMVILKILFLSDIRQSLLFSALLVSPVIARLSVVFSIAISKSARGGKGLGGLLLERAGLREFVIALLISTIAGYFVMPLKDLALLYVISLSFTCLISKYISKKIGGMTGDTLGAVNEFVELIAFIYFSIL</sequence>
<gene>
    <name evidence="1" type="primary">cobS</name>
    <name type="ordered locus">TTE0382</name>
</gene>
<reference key="1">
    <citation type="journal article" date="2002" name="Genome Res.">
        <title>A complete sequence of the T. tengcongensis genome.</title>
        <authorList>
            <person name="Bao Q."/>
            <person name="Tian Y."/>
            <person name="Li W."/>
            <person name="Xu Z."/>
            <person name="Xuan Z."/>
            <person name="Hu S."/>
            <person name="Dong W."/>
            <person name="Yang J."/>
            <person name="Chen Y."/>
            <person name="Xue Y."/>
            <person name="Xu Y."/>
            <person name="Lai X."/>
            <person name="Huang L."/>
            <person name="Dong X."/>
            <person name="Ma Y."/>
            <person name="Ling L."/>
            <person name="Tan H."/>
            <person name="Chen R."/>
            <person name="Wang J."/>
            <person name="Yu J."/>
            <person name="Yang H."/>
        </authorList>
    </citation>
    <scope>NUCLEOTIDE SEQUENCE [LARGE SCALE GENOMIC DNA]</scope>
    <source>
        <strain>DSM 15242 / JCM 11007 / NBRC 100824 / MB4</strain>
    </source>
</reference>
<keyword id="KW-1003">Cell membrane</keyword>
<keyword id="KW-0169">Cobalamin biosynthesis</keyword>
<keyword id="KW-0460">Magnesium</keyword>
<keyword id="KW-0472">Membrane</keyword>
<keyword id="KW-1185">Reference proteome</keyword>
<keyword id="KW-0808">Transferase</keyword>
<keyword id="KW-0812">Transmembrane</keyword>
<keyword id="KW-1133">Transmembrane helix</keyword>
<evidence type="ECO:0000255" key="1">
    <source>
        <dbReference type="HAMAP-Rule" id="MF_00719"/>
    </source>
</evidence>
<dbReference type="EC" id="2.7.8.26" evidence="1"/>
<dbReference type="EMBL" id="AE008691">
    <property type="protein sequence ID" value="AAM23669.1"/>
    <property type="molecule type" value="Genomic_DNA"/>
</dbReference>
<dbReference type="RefSeq" id="WP_011024826.1">
    <property type="nucleotide sequence ID" value="NC_003869.1"/>
</dbReference>
<dbReference type="STRING" id="273068.TTE0382"/>
<dbReference type="KEGG" id="tte:TTE0382"/>
<dbReference type="eggNOG" id="COG0368">
    <property type="taxonomic scope" value="Bacteria"/>
</dbReference>
<dbReference type="HOGENOM" id="CLU_057426_1_2_9"/>
<dbReference type="OrthoDB" id="9794626at2"/>
<dbReference type="UniPathway" id="UPA00148">
    <property type="reaction ID" value="UER00238"/>
</dbReference>
<dbReference type="Proteomes" id="UP000000555">
    <property type="component" value="Chromosome"/>
</dbReference>
<dbReference type="GO" id="GO:0005886">
    <property type="term" value="C:plasma membrane"/>
    <property type="evidence" value="ECO:0007669"/>
    <property type="project" value="UniProtKB-SubCell"/>
</dbReference>
<dbReference type="GO" id="GO:0051073">
    <property type="term" value="F:adenosylcobinamide-GDP ribazoletransferase activity"/>
    <property type="evidence" value="ECO:0007669"/>
    <property type="project" value="UniProtKB-UniRule"/>
</dbReference>
<dbReference type="GO" id="GO:0008818">
    <property type="term" value="F:cobalamin 5'-phosphate synthase activity"/>
    <property type="evidence" value="ECO:0007669"/>
    <property type="project" value="UniProtKB-UniRule"/>
</dbReference>
<dbReference type="GO" id="GO:0009236">
    <property type="term" value="P:cobalamin biosynthetic process"/>
    <property type="evidence" value="ECO:0007669"/>
    <property type="project" value="UniProtKB-UniRule"/>
</dbReference>
<dbReference type="HAMAP" id="MF_00719">
    <property type="entry name" value="CobS"/>
    <property type="match status" value="1"/>
</dbReference>
<dbReference type="InterPro" id="IPR003805">
    <property type="entry name" value="CobS"/>
</dbReference>
<dbReference type="NCBIfam" id="TIGR00317">
    <property type="entry name" value="cobS"/>
    <property type="match status" value="1"/>
</dbReference>
<dbReference type="PANTHER" id="PTHR34148">
    <property type="entry name" value="ADENOSYLCOBINAMIDE-GDP RIBAZOLETRANSFERASE"/>
    <property type="match status" value="1"/>
</dbReference>
<dbReference type="PANTHER" id="PTHR34148:SF1">
    <property type="entry name" value="ADENOSYLCOBINAMIDE-GDP RIBAZOLETRANSFERASE"/>
    <property type="match status" value="1"/>
</dbReference>
<dbReference type="Pfam" id="PF02654">
    <property type="entry name" value="CobS"/>
    <property type="match status" value="1"/>
</dbReference>
<feature type="chain" id="PRO_0000146901" description="Adenosylcobinamide-GDP ribazoletransferase">
    <location>
        <begin position="1"/>
        <end position="248"/>
    </location>
</feature>
<feature type="transmembrane region" description="Helical" evidence="1">
    <location>
        <begin position="3"/>
        <end position="23"/>
    </location>
</feature>
<feature type="transmembrane region" description="Helical" evidence="1">
    <location>
        <begin position="35"/>
        <end position="55"/>
    </location>
</feature>
<feature type="transmembrane region" description="Helical" evidence="1">
    <location>
        <begin position="63"/>
        <end position="83"/>
    </location>
</feature>
<feature type="transmembrane region" description="Helical" evidence="1">
    <location>
        <begin position="109"/>
        <end position="129"/>
    </location>
</feature>
<feature type="transmembrane region" description="Helical" evidence="1">
    <location>
        <begin position="135"/>
        <end position="155"/>
    </location>
</feature>
<feature type="transmembrane region" description="Helical" evidence="1">
    <location>
        <begin position="180"/>
        <end position="199"/>
    </location>
</feature>
<feature type="transmembrane region" description="Helical" evidence="1">
    <location>
        <begin position="200"/>
        <end position="219"/>
    </location>
</feature>
<feature type="transmembrane region" description="Helical" evidence="1">
    <location>
        <begin position="228"/>
        <end position="248"/>
    </location>
</feature>
<accession>Q8RCN8</accession>
<organism>
    <name type="scientific">Caldanaerobacter subterraneus subsp. tengcongensis (strain DSM 15242 / JCM 11007 / NBRC 100824 / MB4)</name>
    <name type="common">Thermoanaerobacter tengcongensis</name>
    <dbReference type="NCBI Taxonomy" id="273068"/>
    <lineage>
        <taxon>Bacteria</taxon>
        <taxon>Bacillati</taxon>
        <taxon>Bacillota</taxon>
        <taxon>Clostridia</taxon>
        <taxon>Thermoanaerobacterales</taxon>
        <taxon>Thermoanaerobacteraceae</taxon>
        <taxon>Caldanaerobacter</taxon>
    </lineage>
</organism>
<protein>
    <recommendedName>
        <fullName evidence="1">Adenosylcobinamide-GDP ribazoletransferase</fullName>
        <ecNumber evidence="1">2.7.8.26</ecNumber>
    </recommendedName>
    <alternativeName>
        <fullName evidence="1">Cobalamin synthase</fullName>
    </alternativeName>
    <alternativeName>
        <fullName evidence="1">Cobalamin-5'-phosphate synthase</fullName>
    </alternativeName>
</protein>
<name>COBS_CALS4</name>
<comment type="function">
    <text evidence="1">Joins adenosylcobinamide-GDP and alpha-ribazole to generate adenosylcobalamin (Ado-cobalamin). Also synthesizes adenosylcobalamin 5'-phosphate from adenosylcobinamide-GDP and alpha-ribazole 5'-phosphate.</text>
</comment>
<comment type="catalytic activity">
    <reaction evidence="1">
        <text>alpha-ribazole + adenosylcob(III)inamide-GDP = adenosylcob(III)alamin + GMP + H(+)</text>
        <dbReference type="Rhea" id="RHEA:16049"/>
        <dbReference type="ChEBI" id="CHEBI:10329"/>
        <dbReference type="ChEBI" id="CHEBI:15378"/>
        <dbReference type="ChEBI" id="CHEBI:18408"/>
        <dbReference type="ChEBI" id="CHEBI:58115"/>
        <dbReference type="ChEBI" id="CHEBI:60487"/>
        <dbReference type="EC" id="2.7.8.26"/>
    </reaction>
</comment>
<comment type="catalytic activity">
    <reaction evidence="1">
        <text>alpha-ribazole 5'-phosphate + adenosylcob(III)inamide-GDP = adenosylcob(III)alamin 5'-phosphate + GMP + H(+)</text>
        <dbReference type="Rhea" id="RHEA:23560"/>
        <dbReference type="ChEBI" id="CHEBI:15378"/>
        <dbReference type="ChEBI" id="CHEBI:57918"/>
        <dbReference type="ChEBI" id="CHEBI:58115"/>
        <dbReference type="ChEBI" id="CHEBI:60487"/>
        <dbReference type="ChEBI" id="CHEBI:60493"/>
        <dbReference type="EC" id="2.7.8.26"/>
    </reaction>
</comment>
<comment type="cofactor">
    <cofactor evidence="1">
        <name>Mg(2+)</name>
        <dbReference type="ChEBI" id="CHEBI:18420"/>
    </cofactor>
</comment>
<comment type="pathway">
    <text evidence="1">Cofactor biosynthesis; adenosylcobalamin biosynthesis; adenosylcobalamin from cob(II)yrinate a,c-diamide: step 7/7.</text>
</comment>
<comment type="subcellular location">
    <subcellularLocation>
        <location evidence="1">Cell membrane</location>
        <topology evidence="1">Multi-pass membrane protein</topology>
    </subcellularLocation>
</comment>
<comment type="similarity">
    <text evidence="1">Belongs to the CobS family.</text>
</comment>